<protein>
    <recommendedName>
        <fullName evidence="1">Small ribosomal subunit protein uS3</fullName>
    </recommendedName>
    <alternativeName>
        <fullName evidence="2">30S ribosomal protein S3</fullName>
    </alternativeName>
</protein>
<dbReference type="EMBL" id="CU928158">
    <property type="protein sequence ID" value="CAQ90777.1"/>
    <property type="molecule type" value="Genomic_DNA"/>
</dbReference>
<dbReference type="RefSeq" id="WP_000529945.1">
    <property type="nucleotide sequence ID" value="NC_011740.1"/>
</dbReference>
<dbReference type="SMR" id="B7LRT0"/>
<dbReference type="GeneID" id="97603663"/>
<dbReference type="KEGG" id="efe:EFER_3297"/>
<dbReference type="HOGENOM" id="CLU_058591_0_2_6"/>
<dbReference type="OrthoDB" id="9806396at2"/>
<dbReference type="Proteomes" id="UP000000745">
    <property type="component" value="Chromosome"/>
</dbReference>
<dbReference type="GO" id="GO:0022627">
    <property type="term" value="C:cytosolic small ribosomal subunit"/>
    <property type="evidence" value="ECO:0007669"/>
    <property type="project" value="TreeGrafter"/>
</dbReference>
<dbReference type="GO" id="GO:0003729">
    <property type="term" value="F:mRNA binding"/>
    <property type="evidence" value="ECO:0007669"/>
    <property type="project" value="UniProtKB-UniRule"/>
</dbReference>
<dbReference type="GO" id="GO:0019843">
    <property type="term" value="F:rRNA binding"/>
    <property type="evidence" value="ECO:0007669"/>
    <property type="project" value="UniProtKB-UniRule"/>
</dbReference>
<dbReference type="GO" id="GO:0003735">
    <property type="term" value="F:structural constituent of ribosome"/>
    <property type="evidence" value="ECO:0007669"/>
    <property type="project" value="InterPro"/>
</dbReference>
<dbReference type="GO" id="GO:0006412">
    <property type="term" value="P:translation"/>
    <property type="evidence" value="ECO:0007669"/>
    <property type="project" value="UniProtKB-UniRule"/>
</dbReference>
<dbReference type="CDD" id="cd02412">
    <property type="entry name" value="KH-II_30S_S3"/>
    <property type="match status" value="1"/>
</dbReference>
<dbReference type="FunFam" id="3.30.1140.32:FF:000001">
    <property type="entry name" value="30S ribosomal protein S3"/>
    <property type="match status" value="1"/>
</dbReference>
<dbReference type="FunFam" id="3.30.300.20:FF:000001">
    <property type="entry name" value="30S ribosomal protein S3"/>
    <property type="match status" value="1"/>
</dbReference>
<dbReference type="Gene3D" id="3.30.300.20">
    <property type="match status" value="1"/>
</dbReference>
<dbReference type="Gene3D" id="3.30.1140.32">
    <property type="entry name" value="Ribosomal protein S3, C-terminal domain"/>
    <property type="match status" value="1"/>
</dbReference>
<dbReference type="HAMAP" id="MF_01309_B">
    <property type="entry name" value="Ribosomal_uS3_B"/>
    <property type="match status" value="1"/>
</dbReference>
<dbReference type="InterPro" id="IPR004087">
    <property type="entry name" value="KH_dom"/>
</dbReference>
<dbReference type="InterPro" id="IPR015946">
    <property type="entry name" value="KH_dom-like_a/b"/>
</dbReference>
<dbReference type="InterPro" id="IPR004044">
    <property type="entry name" value="KH_dom_type_2"/>
</dbReference>
<dbReference type="InterPro" id="IPR009019">
    <property type="entry name" value="KH_sf_prok-type"/>
</dbReference>
<dbReference type="InterPro" id="IPR036419">
    <property type="entry name" value="Ribosomal_S3_C_sf"/>
</dbReference>
<dbReference type="InterPro" id="IPR005704">
    <property type="entry name" value="Ribosomal_uS3_bac-typ"/>
</dbReference>
<dbReference type="InterPro" id="IPR001351">
    <property type="entry name" value="Ribosomal_uS3_C"/>
</dbReference>
<dbReference type="InterPro" id="IPR018280">
    <property type="entry name" value="Ribosomal_uS3_CS"/>
</dbReference>
<dbReference type="NCBIfam" id="TIGR01009">
    <property type="entry name" value="rpsC_bact"/>
    <property type="match status" value="1"/>
</dbReference>
<dbReference type="PANTHER" id="PTHR11760">
    <property type="entry name" value="30S/40S RIBOSOMAL PROTEIN S3"/>
    <property type="match status" value="1"/>
</dbReference>
<dbReference type="PANTHER" id="PTHR11760:SF19">
    <property type="entry name" value="SMALL RIBOSOMAL SUBUNIT PROTEIN US3C"/>
    <property type="match status" value="1"/>
</dbReference>
<dbReference type="Pfam" id="PF07650">
    <property type="entry name" value="KH_2"/>
    <property type="match status" value="1"/>
</dbReference>
<dbReference type="Pfam" id="PF00189">
    <property type="entry name" value="Ribosomal_S3_C"/>
    <property type="match status" value="1"/>
</dbReference>
<dbReference type="SMART" id="SM00322">
    <property type="entry name" value="KH"/>
    <property type="match status" value="1"/>
</dbReference>
<dbReference type="SUPFAM" id="SSF54814">
    <property type="entry name" value="Prokaryotic type KH domain (KH-domain type II)"/>
    <property type="match status" value="1"/>
</dbReference>
<dbReference type="SUPFAM" id="SSF54821">
    <property type="entry name" value="Ribosomal protein S3 C-terminal domain"/>
    <property type="match status" value="1"/>
</dbReference>
<dbReference type="PROSITE" id="PS50823">
    <property type="entry name" value="KH_TYPE_2"/>
    <property type="match status" value="1"/>
</dbReference>
<dbReference type="PROSITE" id="PS00548">
    <property type="entry name" value="RIBOSOMAL_S3"/>
    <property type="match status" value="1"/>
</dbReference>
<organism>
    <name type="scientific">Escherichia fergusonii (strain ATCC 35469 / DSM 13698 / CCUG 18766 / IAM 14443 / JCM 21226 / LMG 7866 / NBRC 102419 / NCTC 12128 / CDC 0568-73)</name>
    <dbReference type="NCBI Taxonomy" id="585054"/>
    <lineage>
        <taxon>Bacteria</taxon>
        <taxon>Pseudomonadati</taxon>
        <taxon>Pseudomonadota</taxon>
        <taxon>Gammaproteobacteria</taxon>
        <taxon>Enterobacterales</taxon>
        <taxon>Enterobacteriaceae</taxon>
        <taxon>Escherichia</taxon>
    </lineage>
</organism>
<evidence type="ECO:0000255" key="1">
    <source>
        <dbReference type="HAMAP-Rule" id="MF_01309"/>
    </source>
</evidence>
<evidence type="ECO:0000305" key="2"/>
<proteinExistence type="inferred from homology"/>
<keyword id="KW-0687">Ribonucleoprotein</keyword>
<keyword id="KW-0689">Ribosomal protein</keyword>
<keyword id="KW-0694">RNA-binding</keyword>
<keyword id="KW-0699">rRNA-binding</keyword>
<accession>B7LRT0</accession>
<feature type="chain" id="PRO_1000140969" description="Small ribosomal subunit protein uS3">
    <location>
        <begin position="1"/>
        <end position="233"/>
    </location>
</feature>
<feature type="domain" description="KH type-2" evidence="1">
    <location>
        <begin position="39"/>
        <end position="107"/>
    </location>
</feature>
<comment type="function">
    <text evidence="1">Binds the lower part of the 30S subunit head. Binds mRNA in the 70S ribosome, positioning it for translation.</text>
</comment>
<comment type="subunit">
    <text evidence="1">Part of the 30S ribosomal subunit. Forms a tight complex with proteins S10 and S14.</text>
</comment>
<comment type="similarity">
    <text evidence="1">Belongs to the universal ribosomal protein uS3 family.</text>
</comment>
<sequence>MGQKVHPNGIRLGIVKPWNSTWFANTKEFADNLDSDFKVRQYLTKELAKASVSRIVIERPAKSIRVTIHTARPGIVIGKKGEDVEKLRKVVADIAGVPAQINIAEVRKPELDAKLVADSITSQLERRVMFRRAMKRAVQNAMRLGAKGIKVEVSGRLGGAEIARTEWYREGRVPLHTLRADIDYNTSEAHTTYGVIGVKVWIFKGEILGGMAAVEQPEKPAAQPKKQQRKGRK</sequence>
<name>RS3_ESCF3</name>
<gene>
    <name evidence="1" type="primary">rpsC</name>
    <name type="ordered locus">EFER_3297</name>
</gene>
<reference key="1">
    <citation type="journal article" date="2009" name="PLoS Genet.">
        <title>Organised genome dynamics in the Escherichia coli species results in highly diverse adaptive paths.</title>
        <authorList>
            <person name="Touchon M."/>
            <person name="Hoede C."/>
            <person name="Tenaillon O."/>
            <person name="Barbe V."/>
            <person name="Baeriswyl S."/>
            <person name="Bidet P."/>
            <person name="Bingen E."/>
            <person name="Bonacorsi S."/>
            <person name="Bouchier C."/>
            <person name="Bouvet O."/>
            <person name="Calteau A."/>
            <person name="Chiapello H."/>
            <person name="Clermont O."/>
            <person name="Cruveiller S."/>
            <person name="Danchin A."/>
            <person name="Diard M."/>
            <person name="Dossat C."/>
            <person name="Karoui M.E."/>
            <person name="Frapy E."/>
            <person name="Garry L."/>
            <person name="Ghigo J.M."/>
            <person name="Gilles A.M."/>
            <person name="Johnson J."/>
            <person name="Le Bouguenec C."/>
            <person name="Lescat M."/>
            <person name="Mangenot S."/>
            <person name="Martinez-Jehanne V."/>
            <person name="Matic I."/>
            <person name="Nassif X."/>
            <person name="Oztas S."/>
            <person name="Petit M.A."/>
            <person name="Pichon C."/>
            <person name="Rouy Z."/>
            <person name="Ruf C.S."/>
            <person name="Schneider D."/>
            <person name="Tourret J."/>
            <person name="Vacherie B."/>
            <person name="Vallenet D."/>
            <person name="Medigue C."/>
            <person name="Rocha E.P.C."/>
            <person name="Denamur E."/>
        </authorList>
    </citation>
    <scope>NUCLEOTIDE SEQUENCE [LARGE SCALE GENOMIC DNA]</scope>
    <source>
        <strain>ATCC 35469 / DSM 13698 / BCRC 15582 / CCUG 18766 / IAM 14443 / JCM 21226 / LMG 7866 / NBRC 102419 / NCTC 12128 / CDC 0568-73</strain>
    </source>
</reference>